<comment type="function">
    <text evidence="1">Catalyzes the radical-mediated insertion of two sulfur atoms into the C-6 and C-8 positions of the octanoyl moiety bound to the lipoyl domains of lipoate-dependent enzymes, thereby converting the octanoylated domains into lipoylated derivatives.</text>
</comment>
<comment type="catalytic activity">
    <reaction evidence="1">
        <text>[[Fe-S] cluster scaffold protein carrying a second [4Fe-4S](2+) cluster] + N(6)-octanoyl-L-lysyl-[protein] + 2 oxidized [2Fe-2S]-[ferredoxin] + 2 S-adenosyl-L-methionine + 4 H(+) = [[Fe-S] cluster scaffold protein] + N(6)-[(R)-dihydrolipoyl]-L-lysyl-[protein] + 4 Fe(3+) + 2 hydrogen sulfide + 2 5'-deoxyadenosine + 2 L-methionine + 2 reduced [2Fe-2S]-[ferredoxin]</text>
        <dbReference type="Rhea" id="RHEA:16585"/>
        <dbReference type="Rhea" id="RHEA-COMP:9928"/>
        <dbReference type="Rhea" id="RHEA-COMP:10000"/>
        <dbReference type="Rhea" id="RHEA-COMP:10001"/>
        <dbReference type="Rhea" id="RHEA-COMP:10475"/>
        <dbReference type="Rhea" id="RHEA-COMP:14568"/>
        <dbReference type="Rhea" id="RHEA-COMP:14569"/>
        <dbReference type="ChEBI" id="CHEBI:15378"/>
        <dbReference type="ChEBI" id="CHEBI:17319"/>
        <dbReference type="ChEBI" id="CHEBI:29034"/>
        <dbReference type="ChEBI" id="CHEBI:29919"/>
        <dbReference type="ChEBI" id="CHEBI:33722"/>
        <dbReference type="ChEBI" id="CHEBI:33737"/>
        <dbReference type="ChEBI" id="CHEBI:33738"/>
        <dbReference type="ChEBI" id="CHEBI:57844"/>
        <dbReference type="ChEBI" id="CHEBI:59789"/>
        <dbReference type="ChEBI" id="CHEBI:78809"/>
        <dbReference type="ChEBI" id="CHEBI:83100"/>
        <dbReference type="EC" id="2.8.1.8"/>
    </reaction>
</comment>
<comment type="cofactor">
    <cofactor evidence="1">
        <name>[4Fe-4S] cluster</name>
        <dbReference type="ChEBI" id="CHEBI:49883"/>
    </cofactor>
    <text evidence="1">Binds 2 [4Fe-4S] clusters per subunit. One cluster is coordinated with 3 cysteines and an exchangeable S-adenosyl-L-methionine.</text>
</comment>
<comment type="pathway">
    <text evidence="1">Protein modification; protein lipoylation via endogenous pathway; protein N(6)-(lipoyl)lysine from octanoyl-[acyl-carrier-protein]: step 2/2.</text>
</comment>
<comment type="subcellular location">
    <subcellularLocation>
        <location evidence="1">Mitochondrion</location>
    </subcellularLocation>
</comment>
<comment type="similarity">
    <text evidence="1">Belongs to the radical SAM superfamily. Lipoyl synthase family.</text>
</comment>
<name>LIPA_CLAL4</name>
<organism>
    <name type="scientific">Clavispora lusitaniae (strain ATCC 42720)</name>
    <name type="common">Yeast</name>
    <name type="synonym">Candida lusitaniae</name>
    <dbReference type="NCBI Taxonomy" id="306902"/>
    <lineage>
        <taxon>Eukaryota</taxon>
        <taxon>Fungi</taxon>
        <taxon>Dikarya</taxon>
        <taxon>Ascomycota</taxon>
        <taxon>Saccharomycotina</taxon>
        <taxon>Pichiomycetes</taxon>
        <taxon>Metschnikowiaceae</taxon>
        <taxon>Clavispora</taxon>
    </lineage>
</organism>
<reference key="1">
    <citation type="journal article" date="2009" name="Nature">
        <title>Evolution of pathogenicity and sexual reproduction in eight Candida genomes.</title>
        <authorList>
            <person name="Butler G."/>
            <person name="Rasmussen M.D."/>
            <person name="Lin M.F."/>
            <person name="Santos M.A.S."/>
            <person name="Sakthikumar S."/>
            <person name="Munro C.A."/>
            <person name="Rheinbay E."/>
            <person name="Grabherr M."/>
            <person name="Forche A."/>
            <person name="Reedy J.L."/>
            <person name="Agrafioti I."/>
            <person name="Arnaud M.B."/>
            <person name="Bates S."/>
            <person name="Brown A.J.P."/>
            <person name="Brunke S."/>
            <person name="Costanzo M.C."/>
            <person name="Fitzpatrick D.A."/>
            <person name="de Groot P.W.J."/>
            <person name="Harris D."/>
            <person name="Hoyer L.L."/>
            <person name="Hube B."/>
            <person name="Klis F.M."/>
            <person name="Kodira C."/>
            <person name="Lennard N."/>
            <person name="Logue M.E."/>
            <person name="Martin R."/>
            <person name="Neiman A.M."/>
            <person name="Nikolaou E."/>
            <person name="Quail M.A."/>
            <person name="Quinn J."/>
            <person name="Santos M.C."/>
            <person name="Schmitzberger F.F."/>
            <person name="Sherlock G."/>
            <person name="Shah P."/>
            <person name="Silverstein K.A.T."/>
            <person name="Skrzypek M.S."/>
            <person name="Soll D."/>
            <person name="Staggs R."/>
            <person name="Stansfield I."/>
            <person name="Stumpf M.P.H."/>
            <person name="Sudbery P.E."/>
            <person name="Srikantha T."/>
            <person name="Zeng Q."/>
            <person name="Berman J."/>
            <person name="Berriman M."/>
            <person name="Heitman J."/>
            <person name="Gow N.A.R."/>
            <person name="Lorenz M.C."/>
            <person name="Birren B.W."/>
            <person name="Kellis M."/>
            <person name="Cuomo C.A."/>
        </authorList>
    </citation>
    <scope>NUCLEOTIDE SEQUENCE [LARGE SCALE GENOMIC DNA]</scope>
    <source>
        <strain>ATCC 42720</strain>
    </source>
</reference>
<feature type="transit peptide" description="Mitochondrion" evidence="1">
    <location>
        <begin position="1"/>
        <end position="44"/>
    </location>
</feature>
<feature type="chain" id="PRO_0000398262" description="Lipoyl synthase, mitochondrial">
    <location>
        <begin position="45"/>
        <end position="391"/>
    </location>
</feature>
<feature type="domain" description="Radical SAM core" evidence="2">
    <location>
        <begin position="135"/>
        <end position="354"/>
    </location>
</feature>
<feature type="binding site" evidence="1">
    <location>
        <position position="120"/>
    </location>
    <ligand>
        <name>[4Fe-4S] cluster</name>
        <dbReference type="ChEBI" id="CHEBI:49883"/>
        <label>1</label>
    </ligand>
</feature>
<feature type="binding site" evidence="1">
    <location>
        <position position="125"/>
    </location>
    <ligand>
        <name>[4Fe-4S] cluster</name>
        <dbReference type="ChEBI" id="CHEBI:49883"/>
        <label>1</label>
    </ligand>
</feature>
<feature type="binding site" evidence="1">
    <location>
        <position position="131"/>
    </location>
    <ligand>
        <name>[4Fe-4S] cluster</name>
        <dbReference type="ChEBI" id="CHEBI:49883"/>
        <label>1</label>
    </ligand>
</feature>
<feature type="binding site" evidence="1">
    <location>
        <position position="150"/>
    </location>
    <ligand>
        <name>[4Fe-4S] cluster</name>
        <dbReference type="ChEBI" id="CHEBI:49883"/>
        <label>2</label>
        <note>4Fe-4S-S-AdoMet</note>
    </ligand>
</feature>
<feature type="binding site" evidence="1">
    <location>
        <position position="154"/>
    </location>
    <ligand>
        <name>[4Fe-4S] cluster</name>
        <dbReference type="ChEBI" id="CHEBI:49883"/>
        <label>2</label>
        <note>4Fe-4S-S-AdoMet</note>
    </ligand>
</feature>
<feature type="binding site" evidence="1">
    <location>
        <position position="157"/>
    </location>
    <ligand>
        <name>[4Fe-4S] cluster</name>
        <dbReference type="ChEBI" id="CHEBI:49883"/>
        <label>2</label>
        <note>4Fe-4S-S-AdoMet</note>
    </ligand>
</feature>
<feature type="binding site" evidence="1">
    <location>
        <position position="365"/>
    </location>
    <ligand>
        <name>[4Fe-4S] cluster</name>
        <dbReference type="ChEBI" id="CHEBI:49883"/>
        <label>1</label>
    </ligand>
</feature>
<keyword id="KW-0004">4Fe-4S</keyword>
<keyword id="KW-0408">Iron</keyword>
<keyword id="KW-0411">Iron-sulfur</keyword>
<keyword id="KW-0479">Metal-binding</keyword>
<keyword id="KW-0496">Mitochondrion</keyword>
<keyword id="KW-1185">Reference proteome</keyword>
<keyword id="KW-0949">S-adenosyl-L-methionine</keyword>
<keyword id="KW-0808">Transferase</keyword>
<keyword id="KW-0809">Transit peptide</keyword>
<protein>
    <recommendedName>
        <fullName evidence="1">Lipoyl synthase, mitochondrial</fullName>
        <ecNumber evidence="1">2.8.1.8</ecNumber>
    </recommendedName>
    <alternativeName>
        <fullName evidence="1">Lipoate synthase</fullName>
        <shortName evidence="1">LS</shortName>
        <shortName evidence="1">Lip-syn</shortName>
    </alternativeName>
    <alternativeName>
        <fullName evidence="1">Lipoic acid synthase</fullName>
    </alternativeName>
</protein>
<proteinExistence type="inferred from homology"/>
<evidence type="ECO:0000255" key="1">
    <source>
        <dbReference type="HAMAP-Rule" id="MF_03123"/>
    </source>
</evidence>
<evidence type="ECO:0000255" key="2">
    <source>
        <dbReference type="PROSITE-ProRule" id="PRU01266"/>
    </source>
</evidence>
<dbReference type="EC" id="2.8.1.8" evidence="1"/>
<dbReference type="EMBL" id="CH408081">
    <property type="protein sequence ID" value="EEQ40847.1"/>
    <property type="molecule type" value="Genomic_DNA"/>
</dbReference>
<dbReference type="RefSeq" id="XP_002614960.1">
    <property type="nucleotide sequence ID" value="XM_002614914.1"/>
</dbReference>
<dbReference type="SMR" id="C4YA37"/>
<dbReference type="FunCoup" id="C4YA37">
    <property type="interactions" value="578"/>
</dbReference>
<dbReference type="STRING" id="306902.C4YA37"/>
<dbReference type="GeneID" id="8495745"/>
<dbReference type="KEGG" id="clu:CLUG_04975"/>
<dbReference type="VEuPathDB" id="FungiDB:CLUG_04975"/>
<dbReference type="HOGENOM" id="CLU_033144_0_1_1"/>
<dbReference type="InParanoid" id="C4YA37"/>
<dbReference type="OMA" id="PYCDIDF"/>
<dbReference type="OrthoDB" id="118794at4891"/>
<dbReference type="UniPathway" id="UPA00538">
    <property type="reaction ID" value="UER00593"/>
</dbReference>
<dbReference type="Proteomes" id="UP000007703">
    <property type="component" value="Unassembled WGS sequence"/>
</dbReference>
<dbReference type="GO" id="GO:0005739">
    <property type="term" value="C:mitochondrion"/>
    <property type="evidence" value="ECO:0007669"/>
    <property type="project" value="UniProtKB-SubCell"/>
</dbReference>
<dbReference type="GO" id="GO:0051539">
    <property type="term" value="F:4 iron, 4 sulfur cluster binding"/>
    <property type="evidence" value="ECO:0007669"/>
    <property type="project" value="UniProtKB-UniRule"/>
</dbReference>
<dbReference type="GO" id="GO:0016992">
    <property type="term" value="F:lipoate synthase activity"/>
    <property type="evidence" value="ECO:0007669"/>
    <property type="project" value="UniProtKB-UniRule"/>
</dbReference>
<dbReference type="GO" id="GO:0046872">
    <property type="term" value="F:metal ion binding"/>
    <property type="evidence" value="ECO:0007669"/>
    <property type="project" value="UniProtKB-KW"/>
</dbReference>
<dbReference type="CDD" id="cd01335">
    <property type="entry name" value="Radical_SAM"/>
    <property type="match status" value="1"/>
</dbReference>
<dbReference type="FunFam" id="3.20.20.70:FF:000036">
    <property type="entry name" value="Lipoyl synthase, mitochondrial"/>
    <property type="match status" value="1"/>
</dbReference>
<dbReference type="Gene3D" id="3.20.20.70">
    <property type="entry name" value="Aldolase class I"/>
    <property type="match status" value="1"/>
</dbReference>
<dbReference type="HAMAP" id="MF_00206">
    <property type="entry name" value="Lipoyl_synth"/>
    <property type="match status" value="1"/>
</dbReference>
<dbReference type="InterPro" id="IPR013785">
    <property type="entry name" value="Aldolase_TIM"/>
</dbReference>
<dbReference type="InterPro" id="IPR006638">
    <property type="entry name" value="Elp3/MiaA/NifB-like_rSAM"/>
</dbReference>
<dbReference type="InterPro" id="IPR031691">
    <property type="entry name" value="LIAS_N"/>
</dbReference>
<dbReference type="InterPro" id="IPR003698">
    <property type="entry name" value="Lipoyl_synth"/>
</dbReference>
<dbReference type="InterPro" id="IPR007197">
    <property type="entry name" value="rSAM"/>
</dbReference>
<dbReference type="NCBIfam" id="TIGR00510">
    <property type="entry name" value="lipA"/>
    <property type="match status" value="1"/>
</dbReference>
<dbReference type="NCBIfam" id="NF004019">
    <property type="entry name" value="PRK05481.1"/>
    <property type="match status" value="1"/>
</dbReference>
<dbReference type="NCBIfam" id="NF009544">
    <property type="entry name" value="PRK12928.1"/>
    <property type="match status" value="1"/>
</dbReference>
<dbReference type="PANTHER" id="PTHR10949">
    <property type="entry name" value="LIPOYL SYNTHASE"/>
    <property type="match status" value="1"/>
</dbReference>
<dbReference type="PANTHER" id="PTHR10949:SF0">
    <property type="entry name" value="LIPOYL SYNTHASE, MITOCHONDRIAL"/>
    <property type="match status" value="1"/>
</dbReference>
<dbReference type="Pfam" id="PF16881">
    <property type="entry name" value="LIAS_N"/>
    <property type="match status" value="1"/>
</dbReference>
<dbReference type="Pfam" id="PF04055">
    <property type="entry name" value="Radical_SAM"/>
    <property type="match status" value="1"/>
</dbReference>
<dbReference type="SFLD" id="SFLDF00271">
    <property type="entry name" value="lipoyl_synthase"/>
    <property type="match status" value="1"/>
</dbReference>
<dbReference type="SFLD" id="SFLDS00029">
    <property type="entry name" value="Radical_SAM"/>
    <property type="match status" value="1"/>
</dbReference>
<dbReference type="SMART" id="SM00729">
    <property type="entry name" value="Elp3"/>
    <property type="match status" value="1"/>
</dbReference>
<dbReference type="SUPFAM" id="SSF102114">
    <property type="entry name" value="Radical SAM enzymes"/>
    <property type="match status" value="1"/>
</dbReference>
<dbReference type="PROSITE" id="PS51918">
    <property type="entry name" value="RADICAL_SAM"/>
    <property type="match status" value="1"/>
</dbReference>
<sequence length="391" mass="43682">MVHPHLSRTKRTFFSHSSQMISRHIRKTNSLAFVRALSASETAVTPRRKRTVFTDELNKGPSFEDFVSGKAADVFVDPLEAARKDPEAKLPKWLKVPIPKGRSFHSVKKDVRELKLATVCEEAKCPNISECWGGKKSEATATIMLLGDTCTRGCRFCSVKTSRTPAKPDPMEPENTAEAISRWGLGYVVLTTVDRDDLADGGAAHLAETVRLIKQKAPQILVEVLGGDFRGDLTSCDTLAVSGLDVYAHNLETVEALTPHVRDRRATYRQSLSILERAKQAKPSLITKTSLMLGFGETDEQIMQTLRDLRGIGCDVVTFGQYMRPTKRHMKVVEYVRPEKFDYWKEVALEMGFLYVASGPLVRSSYKAGEAFIENVLRKRKHNVGDSPRLA</sequence>
<gene>
    <name type="ORF">CLUG_04975</name>
</gene>
<accession>C4YA37</accession>